<reference key="1">
    <citation type="journal article" date="2004" name="Proc. Natl. Acad. Sci. U.S.A.">
        <title>Complete genomes of two clinical Staphylococcus aureus strains: evidence for the rapid evolution of virulence and drug resistance.</title>
        <authorList>
            <person name="Holden M.T.G."/>
            <person name="Feil E.J."/>
            <person name="Lindsay J.A."/>
            <person name="Peacock S.J."/>
            <person name="Day N.P.J."/>
            <person name="Enright M.C."/>
            <person name="Foster T.J."/>
            <person name="Moore C.E."/>
            <person name="Hurst L."/>
            <person name="Atkin R."/>
            <person name="Barron A."/>
            <person name="Bason N."/>
            <person name="Bentley S.D."/>
            <person name="Chillingworth C."/>
            <person name="Chillingworth T."/>
            <person name="Churcher C."/>
            <person name="Clark L."/>
            <person name="Corton C."/>
            <person name="Cronin A."/>
            <person name="Doggett J."/>
            <person name="Dowd L."/>
            <person name="Feltwell T."/>
            <person name="Hance Z."/>
            <person name="Harris B."/>
            <person name="Hauser H."/>
            <person name="Holroyd S."/>
            <person name="Jagels K."/>
            <person name="James K.D."/>
            <person name="Lennard N."/>
            <person name="Line A."/>
            <person name="Mayes R."/>
            <person name="Moule S."/>
            <person name="Mungall K."/>
            <person name="Ormond D."/>
            <person name="Quail M.A."/>
            <person name="Rabbinowitsch E."/>
            <person name="Rutherford K.M."/>
            <person name="Sanders M."/>
            <person name="Sharp S."/>
            <person name="Simmonds M."/>
            <person name="Stevens K."/>
            <person name="Whitehead S."/>
            <person name="Barrell B.G."/>
            <person name="Spratt B.G."/>
            <person name="Parkhill J."/>
        </authorList>
    </citation>
    <scope>NUCLEOTIDE SEQUENCE [LARGE SCALE GENOMIC DNA]</scope>
    <source>
        <strain>MSSA476</strain>
    </source>
</reference>
<protein>
    <recommendedName>
        <fullName>Response regulator ArlR</fullName>
    </recommendedName>
</protein>
<sequence>MTQILIVEDEQNLARFLELELTHENYNVDTEYDGQDGLDKALSHYYDLIILDLMLPSINGLEICRKIRQQQSTPIIIITAKSDTYDKVAGLDYGADDYIVKPFDIEELLARIRAILRRQPQKDIIDVNGITIDKNAFKVTVNGAEIELTKTEYDLLYLLAENKNHVMQREQILNHVWGYNSEVETNVVDVYIRYLRNKLKPYDRDKMIETVRGVGYVIR</sequence>
<name>ARLR_STAAS</name>
<accession>Q6G9E6</accession>
<dbReference type="EMBL" id="BX571857">
    <property type="protein sequence ID" value="CAG43133.1"/>
    <property type="molecule type" value="Genomic_DNA"/>
</dbReference>
<dbReference type="RefSeq" id="WP_000192137.1">
    <property type="nucleotide sequence ID" value="NC_002953.3"/>
</dbReference>
<dbReference type="SMR" id="Q6G9E6"/>
<dbReference type="KEGG" id="sas:SAS1358"/>
<dbReference type="HOGENOM" id="CLU_000445_30_1_9"/>
<dbReference type="GO" id="GO:0005829">
    <property type="term" value="C:cytosol"/>
    <property type="evidence" value="ECO:0007669"/>
    <property type="project" value="TreeGrafter"/>
</dbReference>
<dbReference type="GO" id="GO:0032993">
    <property type="term" value="C:protein-DNA complex"/>
    <property type="evidence" value="ECO:0007669"/>
    <property type="project" value="TreeGrafter"/>
</dbReference>
<dbReference type="GO" id="GO:0000156">
    <property type="term" value="F:phosphorelay response regulator activity"/>
    <property type="evidence" value="ECO:0007669"/>
    <property type="project" value="TreeGrafter"/>
</dbReference>
<dbReference type="GO" id="GO:0000976">
    <property type="term" value="F:transcription cis-regulatory region binding"/>
    <property type="evidence" value="ECO:0007669"/>
    <property type="project" value="TreeGrafter"/>
</dbReference>
<dbReference type="GO" id="GO:0006355">
    <property type="term" value="P:regulation of DNA-templated transcription"/>
    <property type="evidence" value="ECO:0007669"/>
    <property type="project" value="InterPro"/>
</dbReference>
<dbReference type="CDD" id="cd00383">
    <property type="entry name" value="trans_reg_C"/>
    <property type="match status" value="1"/>
</dbReference>
<dbReference type="FunFam" id="3.40.50.2300:FF:000001">
    <property type="entry name" value="DNA-binding response regulator PhoB"/>
    <property type="match status" value="1"/>
</dbReference>
<dbReference type="FunFam" id="1.10.10.10:FF:000005">
    <property type="entry name" value="Two-component system response regulator"/>
    <property type="match status" value="1"/>
</dbReference>
<dbReference type="Gene3D" id="3.40.50.2300">
    <property type="match status" value="1"/>
</dbReference>
<dbReference type="Gene3D" id="6.10.250.690">
    <property type="match status" value="1"/>
</dbReference>
<dbReference type="Gene3D" id="1.10.10.10">
    <property type="entry name" value="Winged helix-like DNA-binding domain superfamily/Winged helix DNA-binding domain"/>
    <property type="match status" value="1"/>
</dbReference>
<dbReference type="InterPro" id="IPR011006">
    <property type="entry name" value="CheY-like_superfamily"/>
</dbReference>
<dbReference type="InterPro" id="IPR001867">
    <property type="entry name" value="OmpR/PhoB-type_DNA-bd"/>
</dbReference>
<dbReference type="InterPro" id="IPR016032">
    <property type="entry name" value="Sig_transdc_resp-reg_C-effctor"/>
</dbReference>
<dbReference type="InterPro" id="IPR001789">
    <property type="entry name" value="Sig_transdc_resp-reg_receiver"/>
</dbReference>
<dbReference type="InterPro" id="IPR039420">
    <property type="entry name" value="WalR-like"/>
</dbReference>
<dbReference type="InterPro" id="IPR036388">
    <property type="entry name" value="WH-like_DNA-bd_sf"/>
</dbReference>
<dbReference type="PANTHER" id="PTHR48111">
    <property type="entry name" value="REGULATOR OF RPOS"/>
    <property type="match status" value="1"/>
</dbReference>
<dbReference type="PANTHER" id="PTHR48111:SF22">
    <property type="entry name" value="REGULATOR OF RPOS"/>
    <property type="match status" value="1"/>
</dbReference>
<dbReference type="Pfam" id="PF00072">
    <property type="entry name" value="Response_reg"/>
    <property type="match status" value="1"/>
</dbReference>
<dbReference type="Pfam" id="PF00486">
    <property type="entry name" value="Trans_reg_C"/>
    <property type="match status" value="1"/>
</dbReference>
<dbReference type="SMART" id="SM00448">
    <property type="entry name" value="REC"/>
    <property type="match status" value="1"/>
</dbReference>
<dbReference type="SMART" id="SM00862">
    <property type="entry name" value="Trans_reg_C"/>
    <property type="match status" value="1"/>
</dbReference>
<dbReference type="SUPFAM" id="SSF46894">
    <property type="entry name" value="C-terminal effector domain of the bipartite response regulators"/>
    <property type="match status" value="1"/>
</dbReference>
<dbReference type="SUPFAM" id="SSF52172">
    <property type="entry name" value="CheY-like"/>
    <property type="match status" value="1"/>
</dbReference>
<dbReference type="PROSITE" id="PS51755">
    <property type="entry name" value="OMPR_PHOB"/>
    <property type="match status" value="1"/>
</dbReference>
<dbReference type="PROSITE" id="PS50110">
    <property type="entry name" value="RESPONSE_REGULATORY"/>
    <property type="match status" value="1"/>
</dbReference>
<gene>
    <name type="primary">arlR</name>
    <name type="ordered locus">SAS1358</name>
</gene>
<comment type="function">
    <text evidence="1">Member of the two-component regulatory system ArlS/ArlR involved in the regulation of adhesion, autolysis, multidrug resistance and virulence.</text>
</comment>
<comment type="subcellular location">
    <subcellularLocation>
        <location evidence="1">Cytoplasm</location>
    </subcellularLocation>
</comment>
<comment type="PTM">
    <text evidence="1">Phosphorylated by ArlS.</text>
</comment>
<organism>
    <name type="scientific">Staphylococcus aureus (strain MSSA476)</name>
    <dbReference type="NCBI Taxonomy" id="282459"/>
    <lineage>
        <taxon>Bacteria</taxon>
        <taxon>Bacillati</taxon>
        <taxon>Bacillota</taxon>
        <taxon>Bacilli</taxon>
        <taxon>Bacillales</taxon>
        <taxon>Staphylococcaceae</taxon>
        <taxon>Staphylococcus</taxon>
    </lineage>
</organism>
<feature type="chain" id="PRO_0000081018" description="Response regulator ArlR">
    <location>
        <begin position="1"/>
        <end position="219"/>
    </location>
</feature>
<feature type="domain" description="Response regulatory" evidence="2">
    <location>
        <begin position="3"/>
        <end position="116"/>
    </location>
</feature>
<feature type="DNA-binding region" description="OmpR/PhoB-type" evidence="3">
    <location>
        <begin position="122"/>
        <end position="219"/>
    </location>
</feature>
<feature type="modified residue" description="4-aspartylphosphate" evidence="2">
    <location>
        <position position="52"/>
    </location>
</feature>
<keyword id="KW-0010">Activator</keyword>
<keyword id="KW-0963">Cytoplasm</keyword>
<keyword id="KW-0238">DNA-binding</keyword>
<keyword id="KW-0597">Phosphoprotein</keyword>
<keyword id="KW-0678">Repressor</keyword>
<keyword id="KW-0804">Transcription</keyword>
<keyword id="KW-0805">Transcription regulation</keyword>
<keyword id="KW-0902">Two-component regulatory system</keyword>
<keyword id="KW-0843">Virulence</keyword>
<proteinExistence type="inferred from homology"/>
<evidence type="ECO:0000250" key="1"/>
<evidence type="ECO:0000255" key="2">
    <source>
        <dbReference type="PROSITE-ProRule" id="PRU00169"/>
    </source>
</evidence>
<evidence type="ECO:0000255" key="3">
    <source>
        <dbReference type="PROSITE-ProRule" id="PRU01091"/>
    </source>
</evidence>